<organism>
    <name type="scientific">Mus musculus</name>
    <name type="common">Mouse</name>
    <dbReference type="NCBI Taxonomy" id="10090"/>
    <lineage>
        <taxon>Eukaryota</taxon>
        <taxon>Metazoa</taxon>
        <taxon>Chordata</taxon>
        <taxon>Craniata</taxon>
        <taxon>Vertebrata</taxon>
        <taxon>Euteleostomi</taxon>
        <taxon>Mammalia</taxon>
        <taxon>Eutheria</taxon>
        <taxon>Euarchontoglires</taxon>
        <taxon>Glires</taxon>
        <taxon>Rodentia</taxon>
        <taxon>Myomorpha</taxon>
        <taxon>Muroidea</taxon>
        <taxon>Muridae</taxon>
        <taxon>Murinae</taxon>
        <taxon>Mus</taxon>
        <taxon>Mus</taxon>
    </lineage>
</organism>
<feature type="chain" id="PRO_0000348263" description="Centrosomal protein of 120 kDa">
    <location>
        <begin position="1"/>
        <end position="988"/>
    </location>
</feature>
<feature type="domain" description="C2 1" evidence="3">
    <location>
        <begin position="1"/>
        <end position="112"/>
    </location>
</feature>
<feature type="domain" description="C2 2" evidence="3">
    <location>
        <begin position="435"/>
        <end position="569"/>
    </location>
</feature>
<feature type="region of interest" description="Disordered" evidence="4">
    <location>
        <begin position="354"/>
        <end position="425"/>
    </location>
</feature>
<feature type="region of interest" description="Disordered" evidence="4">
    <location>
        <begin position="624"/>
        <end position="644"/>
    </location>
</feature>
<feature type="coiled-coil region" evidence="2">
    <location>
        <begin position="706"/>
        <end position="929"/>
    </location>
</feature>
<feature type="compositionally biased region" description="Pro residues" evidence="4">
    <location>
        <begin position="384"/>
        <end position="394"/>
    </location>
</feature>
<feature type="modified residue" description="Phosphoserine" evidence="11">
    <location>
        <position position="934"/>
    </location>
</feature>
<feature type="modified residue" description="Phosphoserine" evidence="11">
    <location>
        <position position="938"/>
    </location>
</feature>
<feature type="splice variant" id="VSP_035126" description="In isoform 4." evidence="8">
    <location>
        <begin position="1"/>
        <end position="901"/>
    </location>
</feature>
<feature type="splice variant" id="VSP_035127" description="In isoform 3." evidence="9">
    <original>SLIELKTQNGHEAEHSQKR</original>
    <variation>AGGDSAFTCQFSHARDDKR</variation>
    <location>
        <begin position="347"/>
        <end position="365"/>
    </location>
</feature>
<feature type="splice variant" id="VSP_035128" description="In isoform 3." evidence="9">
    <location>
        <begin position="366"/>
        <end position="988"/>
    </location>
</feature>
<feature type="splice variant" id="VSP_035129" description="In isoform 4." evidence="8">
    <original>ELLDIRNELN</original>
    <variation>MNLLRRSLHP</variation>
    <location>
        <begin position="902"/>
        <end position="911"/>
    </location>
</feature>
<feature type="splice variant" id="VSP_035130" description="In isoform 2." evidence="9">
    <original>LRQQEQNQYQDCKEIASGKLGSPRGSGLEEGLDDYLTRLIEERDTLMRTGVYNHEDRIISELDRQIREVLTKNSAS</original>
    <variation>YCPYNHSFSHQHRSDSQ</variation>
    <location>
        <begin position="913"/>
        <end position="988"/>
    </location>
</feature>
<feature type="sequence conflict" description="In Ref. 1; BAC33092." evidence="10" ref="1">
    <original>R</original>
    <variation>G</variation>
    <location>
        <position position="614"/>
    </location>
</feature>
<feature type="strand" evidence="12">
    <location>
        <begin position="455"/>
        <end position="467"/>
    </location>
</feature>
<feature type="strand" evidence="12">
    <location>
        <begin position="471"/>
        <end position="473"/>
    </location>
</feature>
<feature type="strand" evidence="12">
    <location>
        <begin position="475"/>
        <end position="481"/>
    </location>
</feature>
<feature type="helix" evidence="12">
    <location>
        <begin position="484"/>
        <end position="486"/>
    </location>
</feature>
<feature type="strand" evidence="12">
    <location>
        <begin position="498"/>
        <end position="500"/>
    </location>
</feature>
<feature type="strand" evidence="12">
    <location>
        <begin position="512"/>
        <end position="519"/>
    </location>
</feature>
<feature type="helix" evidence="12">
    <location>
        <begin position="521"/>
        <end position="530"/>
    </location>
</feature>
<feature type="strand" evidence="12">
    <location>
        <begin position="533"/>
        <end position="539"/>
    </location>
</feature>
<feature type="strand" evidence="12">
    <location>
        <begin position="542"/>
        <end position="544"/>
    </location>
</feature>
<feature type="strand" evidence="12">
    <location>
        <begin position="547"/>
        <end position="554"/>
    </location>
</feature>
<feature type="helix" evidence="12">
    <location>
        <begin position="556"/>
        <end position="561"/>
    </location>
</feature>
<feature type="strand" evidence="12">
    <location>
        <begin position="565"/>
        <end position="568"/>
    </location>
</feature>
<feature type="strand" evidence="12">
    <location>
        <begin position="574"/>
        <end position="593"/>
    </location>
</feature>
<feature type="strand" evidence="12">
    <location>
        <begin position="595"/>
        <end position="610"/>
    </location>
</feature>
<name>CE120_MOUSE</name>
<accession>Q7TSG1</accession>
<accession>Q80Y93</accession>
<accession>Q80ZQ2</accession>
<accession>Q8BG01</accession>
<accession>Q8C580</accession>
<accession>Q8C8B6</accession>
<accession>Q8CAF2</accession>
<sequence length="988" mass="112579">MVPKSDQLLIVVSILEGRHFPKRPKHLLVVEAKFDGEQLATDPVDHTDQPEFATELAWEIDRKVLHQHRLQRTPIKLQCFALDPQTSAKETVGYIVLDLRTAQETKQAPKWYQLLSNKYTKFKAEVQISLTLETDTKAQVDSYKAKAAPPRDGKVLASLAGVDPKDIVAVLNEEGGYHQIGPAEHCTDPFILSVTIAFATQLEQLIPCTMKLPERQPEFFFYYSLLGNDVTNEPFSDLINPNFEPERASVRIRSSVEILRVYLALHSKLQIHLCCGDQSLGSTEIPLNGLLKKGSTEINQHPVTVEGAFTLDPPNRAKQKLAPVPLDLAPTVGVSVALQREGIDSQSLIELKTQNGHEAEHSQKRVLTPIKEKTLTGPKSPRESPAPPPPPNQTPPTKDDATESEVESLQYDKDPKPTVKGIGSVPASLAQPEATCGASEVVTSGQKIAVPAASHHFCFSVDLRSVHDLELSFPVNCILRYSYPFFGSAAPIMTNPPVEVRKNMEVFLPQSYCAFDFATMPHQLQDTFLRIPLLVELWHKDKMSKDLLLGVARIQLSNILSSEKTRFLGANGEQCWRQTYSESVPVIAAQGSNNRILDLSYTMTLEDYGLVKMREIFVSESSQGVPAVDQKPSSPPPAPCPSEIQMEPRETLEYKAALELEMWKEMQEDIFESQLKQKELAHMQALAEEWKKRDRERESLVKKKVAEYSILEGKLQKALTELETREQQLASAEAELQRERKELQLERERNLQELQDSVRRARDDCVYQVELERLKLKQLEEDKQRLQQQLNDAGNKYKTLEKEFQQFKDQQNNKPEIRLQSEINLLTLEKVELERKLESATKSKLHYKQQWGRALKELARLKQREQESQMARLKKQQEELEQMRLRYLAAEEKETVRTEQQELLDIRNELNRLRQQEQNQYQDCKEIASGKLGSPRGSGLEEGLDDYLTRLIEERDTLMRTGVYNHEDRIISELDRQIREVLTKNSAS</sequence>
<protein>
    <recommendedName>
        <fullName>Centrosomal protein of 120 kDa</fullName>
        <shortName>Cep120</shortName>
    </recommendedName>
    <alternativeName>
        <fullName>Coiled-coil domain-containing protein 100</fullName>
    </alternativeName>
</protein>
<evidence type="ECO:0000250" key="1">
    <source>
        <dbReference type="UniProtKB" id="Q8N960"/>
    </source>
</evidence>
<evidence type="ECO:0000255" key="2"/>
<evidence type="ECO:0000255" key="3">
    <source>
        <dbReference type="PROSITE-ProRule" id="PRU00041"/>
    </source>
</evidence>
<evidence type="ECO:0000256" key="4">
    <source>
        <dbReference type="SAM" id="MobiDB-lite"/>
    </source>
</evidence>
<evidence type="ECO:0000269" key="5">
    <source>
    </source>
</evidence>
<evidence type="ECO:0000269" key="6">
    <source>
    </source>
</evidence>
<evidence type="ECO:0000269" key="7">
    <source>
    </source>
</evidence>
<evidence type="ECO:0000303" key="8">
    <source>
    </source>
</evidence>
<evidence type="ECO:0000303" key="9">
    <source>
    </source>
</evidence>
<evidence type="ECO:0000305" key="10"/>
<evidence type="ECO:0007744" key="11">
    <source>
    </source>
</evidence>
<evidence type="ECO:0007829" key="12">
    <source>
        <dbReference type="PDB" id="6EWP"/>
    </source>
</evidence>
<gene>
    <name type="primary">Cep120</name>
    <name type="synonym">Ccdc100</name>
</gene>
<comment type="function">
    <text evidence="1 5 6 7">Plays a role in the microtubule-dependent coupling of the nucleus and the centrosome. Involved in the processes that regulate centrosome-mediated interkinetic nuclear migration (INM) of neural progenitors and for proper positioning of neurons during brain development. Also implicated in the migration and selfrenewal of neural progenitors. Required for centriole duplication and maturation during mitosis and subsequent ciliogenesis. Required for the recruitment of CEP295 to the proximal end of new-born centrioles at the centriolar microtubule wall during early S phase in a PLK4-dependent manner (By similarity).</text>
</comment>
<comment type="subunit">
    <text evidence="5 6 7">Interacts with TACC2, TACC3, CCDC52, TALPID3.</text>
</comment>
<comment type="interaction">
    <interactant intactId="EBI-2553947">
        <id>Q7TSG1</id>
    </interactant>
    <interactant intactId="EBI-11692182">
        <id>E9PV87</id>
        <label>Talpid3</label>
    </interactant>
    <organismsDiffer>false</organismsDiffer>
    <experiments>3</experiments>
</comment>
<comment type="subcellular location">
    <subcellularLocation>
        <location evidence="5">Cytoplasm</location>
        <location evidence="5">Cytoskeleton</location>
        <location evidence="5">Microtubule organizing center</location>
        <location evidence="5">Centrosome</location>
    </subcellularLocation>
    <text evidence="5">Regulates the localization of TACC3 to the centrosome in neural progenitors in vivo.</text>
</comment>
<comment type="alternative products">
    <event type="alternative splicing"/>
    <isoform>
        <id>Q7TSG1-1</id>
        <name>1</name>
        <sequence type="displayed"/>
    </isoform>
    <isoform>
        <id>Q7TSG1-2</id>
        <name>2</name>
        <sequence type="described" ref="VSP_035130"/>
    </isoform>
    <isoform>
        <id>Q7TSG1-3</id>
        <name>3</name>
        <sequence type="described" ref="VSP_035127 VSP_035128"/>
    </isoform>
    <isoform>
        <id>Q7TSG1-4</id>
        <name>4</name>
        <sequence type="described" ref="VSP_035126 VSP_035129"/>
    </isoform>
</comment>
<comment type="tissue specificity">
    <text evidence="5">Ubiquitous. Highly expressed in brain, lung and kidney and weakly expressed in heart, liver, small intestine and limb (at protein level). Expressed in brain.</text>
</comment>
<comment type="developmental stage">
    <text evidence="5">Expressed in embryonic brain from 10.5 to 17.5 dpc. Expressed in neocortical neural progenitors at the ventrical surface at 12.5 dpc (at protein level). Expressed in brain, heart, lung, liver, kidney, small intestine and limb at 16.5 dpc.</text>
</comment>
<comment type="similarity">
    <text evidence="10">Belongs to the CEP120 family.</text>
</comment>
<reference key="1">
    <citation type="journal article" date="2005" name="Science">
        <title>The transcriptional landscape of the mammalian genome.</title>
        <authorList>
            <person name="Carninci P."/>
            <person name="Kasukawa T."/>
            <person name="Katayama S."/>
            <person name="Gough J."/>
            <person name="Frith M.C."/>
            <person name="Maeda N."/>
            <person name="Oyama R."/>
            <person name="Ravasi T."/>
            <person name="Lenhard B."/>
            <person name="Wells C."/>
            <person name="Kodzius R."/>
            <person name="Shimokawa K."/>
            <person name="Bajic V.B."/>
            <person name="Brenner S.E."/>
            <person name="Batalov S."/>
            <person name="Forrest A.R."/>
            <person name="Zavolan M."/>
            <person name="Davis M.J."/>
            <person name="Wilming L.G."/>
            <person name="Aidinis V."/>
            <person name="Allen J.E."/>
            <person name="Ambesi-Impiombato A."/>
            <person name="Apweiler R."/>
            <person name="Aturaliya R.N."/>
            <person name="Bailey T.L."/>
            <person name="Bansal M."/>
            <person name="Baxter L."/>
            <person name="Beisel K.W."/>
            <person name="Bersano T."/>
            <person name="Bono H."/>
            <person name="Chalk A.M."/>
            <person name="Chiu K.P."/>
            <person name="Choudhary V."/>
            <person name="Christoffels A."/>
            <person name="Clutterbuck D.R."/>
            <person name="Crowe M.L."/>
            <person name="Dalla E."/>
            <person name="Dalrymple B.P."/>
            <person name="de Bono B."/>
            <person name="Della Gatta G."/>
            <person name="di Bernardo D."/>
            <person name="Down T."/>
            <person name="Engstrom P."/>
            <person name="Fagiolini M."/>
            <person name="Faulkner G."/>
            <person name="Fletcher C.F."/>
            <person name="Fukushima T."/>
            <person name="Furuno M."/>
            <person name="Futaki S."/>
            <person name="Gariboldi M."/>
            <person name="Georgii-Hemming P."/>
            <person name="Gingeras T.R."/>
            <person name="Gojobori T."/>
            <person name="Green R.E."/>
            <person name="Gustincich S."/>
            <person name="Harbers M."/>
            <person name="Hayashi Y."/>
            <person name="Hensch T.K."/>
            <person name="Hirokawa N."/>
            <person name="Hill D."/>
            <person name="Huminiecki L."/>
            <person name="Iacono M."/>
            <person name="Ikeo K."/>
            <person name="Iwama A."/>
            <person name="Ishikawa T."/>
            <person name="Jakt M."/>
            <person name="Kanapin A."/>
            <person name="Katoh M."/>
            <person name="Kawasawa Y."/>
            <person name="Kelso J."/>
            <person name="Kitamura H."/>
            <person name="Kitano H."/>
            <person name="Kollias G."/>
            <person name="Krishnan S.P."/>
            <person name="Kruger A."/>
            <person name="Kummerfeld S.K."/>
            <person name="Kurochkin I.V."/>
            <person name="Lareau L.F."/>
            <person name="Lazarevic D."/>
            <person name="Lipovich L."/>
            <person name="Liu J."/>
            <person name="Liuni S."/>
            <person name="McWilliam S."/>
            <person name="Madan Babu M."/>
            <person name="Madera M."/>
            <person name="Marchionni L."/>
            <person name="Matsuda H."/>
            <person name="Matsuzawa S."/>
            <person name="Miki H."/>
            <person name="Mignone F."/>
            <person name="Miyake S."/>
            <person name="Morris K."/>
            <person name="Mottagui-Tabar S."/>
            <person name="Mulder N."/>
            <person name="Nakano N."/>
            <person name="Nakauchi H."/>
            <person name="Ng P."/>
            <person name="Nilsson R."/>
            <person name="Nishiguchi S."/>
            <person name="Nishikawa S."/>
            <person name="Nori F."/>
            <person name="Ohara O."/>
            <person name="Okazaki Y."/>
            <person name="Orlando V."/>
            <person name="Pang K.C."/>
            <person name="Pavan W.J."/>
            <person name="Pavesi G."/>
            <person name="Pesole G."/>
            <person name="Petrovsky N."/>
            <person name="Piazza S."/>
            <person name="Reed J."/>
            <person name="Reid J.F."/>
            <person name="Ring B.Z."/>
            <person name="Ringwald M."/>
            <person name="Rost B."/>
            <person name="Ruan Y."/>
            <person name="Salzberg S.L."/>
            <person name="Sandelin A."/>
            <person name="Schneider C."/>
            <person name="Schoenbach C."/>
            <person name="Sekiguchi K."/>
            <person name="Semple C.A."/>
            <person name="Seno S."/>
            <person name="Sessa L."/>
            <person name="Sheng Y."/>
            <person name="Shibata Y."/>
            <person name="Shimada H."/>
            <person name="Shimada K."/>
            <person name="Silva D."/>
            <person name="Sinclair B."/>
            <person name="Sperling S."/>
            <person name="Stupka E."/>
            <person name="Sugiura K."/>
            <person name="Sultana R."/>
            <person name="Takenaka Y."/>
            <person name="Taki K."/>
            <person name="Tammoja K."/>
            <person name="Tan S.L."/>
            <person name="Tang S."/>
            <person name="Taylor M.S."/>
            <person name="Tegner J."/>
            <person name="Teichmann S.A."/>
            <person name="Ueda H.R."/>
            <person name="van Nimwegen E."/>
            <person name="Verardo R."/>
            <person name="Wei C.L."/>
            <person name="Yagi K."/>
            <person name="Yamanishi H."/>
            <person name="Zabarovsky E."/>
            <person name="Zhu S."/>
            <person name="Zimmer A."/>
            <person name="Hide W."/>
            <person name="Bult C."/>
            <person name="Grimmond S.M."/>
            <person name="Teasdale R.D."/>
            <person name="Liu E.T."/>
            <person name="Brusic V."/>
            <person name="Quackenbush J."/>
            <person name="Wahlestedt C."/>
            <person name="Mattick J.S."/>
            <person name="Hume D.A."/>
            <person name="Kai C."/>
            <person name="Sasaki D."/>
            <person name="Tomaru Y."/>
            <person name="Fukuda S."/>
            <person name="Kanamori-Katayama M."/>
            <person name="Suzuki M."/>
            <person name="Aoki J."/>
            <person name="Arakawa T."/>
            <person name="Iida J."/>
            <person name="Imamura K."/>
            <person name="Itoh M."/>
            <person name="Kato T."/>
            <person name="Kawaji H."/>
            <person name="Kawagashira N."/>
            <person name="Kawashima T."/>
            <person name="Kojima M."/>
            <person name="Kondo S."/>
            <person name="Konno H."/>
            <person name="Nakano K."/>
            <person name="Ninomiya N."/>
            <person name="Nishio T."/>
            <person name="Okada M."/>
            <person name="Plessy C."/>
            <person name="Shibata K."/>
            <person name="Shiraki T."/>
            <person name="Suzuki S."/>
            <person name="Tagami M."/>
            <person name="Waki K."/>
            <person name="Watahiki A."/>
            <person name="Okamura-Oho Y."/>
            <person name="Suzuki H."/>
            <person name="Kawai J."/>
            <person name="Hayashizaki Y."/>
        </authorList>
    </citation>
    <scope>NUCLEOTIDE SEQUENCE [LARGE SCALE MRNA] (ISOFORMS 2 AND 3)</scope>
    <scope>NUCLEOTIDE SEQUENCE [LARGE SCALE MRNA] OF 1-701 (ISOFORM 1/2)</scope>
    <source>
        <strain>C57BL/6J</strain>
        <tissue>Cerebellum</tissue>
        <tissue>Embryo</tissue>
        <tissue>Hypothalamus</tissue>
    </source>
</reference>
<reference key="2">
    <citation type="journal article" date="2004" name="Genome Res.">
        <title>The status, quality, and expansion of the NIH full-length cDNA project: the Mammalian Gene Collection (MGC).</title>
        <authorList>
            <consortium name="The MGC Project Team"/>
        </authorList>
    </citation>
    <scope>NUCLEOTIDE SEQUENCE [LARGE SCALE MRNA] (ISOFORMS 1 AND 4)</scope>
    <source>
        <tissue>Embryo</tissue>
        <tissue>Eye</tissue>
        <tissue>Testis</tissue>
    </source>
</reference>
<reference key="3">
    <citation type="journal article" date="2007" name="Neuron">
        <title>Cep120 and TACCs control interkinetic nuclear migration and the neural progenitor pool.</title>
        <authorList>
            <person name="Xie Z."/>
            <person name="Moy L.Y."/>
            <person name="Sanada K."/>
            <person name="Zhou Y."/>
            <person name="Buchman J.J."/>
            <person name="Tsai L.-H."/>
        </authorList>
    </citation>
    <scope>FUNCTION</scope>
    <scope>INTERACTION WITH TACC2 AND TACC3</scope>
    <scope>SUBCELLULAR LOCATION</scope>
    <scope>TISSUE SPECIFICITY</scope>
    <scope>DEVELOPMENTAL STAGE</scope>
</reference>
<reference key="4">
    <citation type="journal article" date="2010" name="Cell">
        <title>A tissue-specific atlas of mouse protein phosphorylation and expression.</title>
        <authorList>
            <person name="Huttlin E.L."/>
            <person name="Jedrychowski M.P."/>
            <person name="Elias J.E."/>
            <person name="Goswami T."/>
            <person name="Rad R."/>
            <person name="Beausoleil S.A."/>
            <person name="Villen J."/>
            <person name="Haas W."/>
            <person name="Sowa M.E."/>
            <person name="Gygi S.P."/>
        </authorList>
    </citation>
    <scope>PHOSPHORYLATION [LARGE SCALE ANALYSIS] AT SER-934 AND SER-938</scope>
    <scope>IDENTIFICATION BY MASS SPECTROMETRY [LARGE SCALE ANALYSIS]</scope>
    <source>
        <tissue>Kidney</tissue>
        <tissue>Liver</tissue>
        <tissue>Lung</tissue>
        <tissue>Spleen</tissue>
        <tissue>Testis</tissue>
    </source>
</reference>
<reference key="5">
    <citation type="journal article" date="2010" name="Science">
        <title>Systematic analysis of human protein complexes identifies chromosome segregation proteins.</title>
        <authorList>
            <person name="Hutchins J.R."/>
            <person name="Toyoda Y."/>
            <person name="Hegemann B."/>
            <person name="Poser I."/>
            <person name="Heriche J.K."/>
            <person name="Sykora M.M."/>
            <person name="Augsburg M."/>
            <person name="Hudecz O."/>
            <person name="Buschhorn B.A."/>
            <person name="Bulkescher J."/>
            <person name="Conrad C."/>
            <person name="Comartin D."/>
            <person name="Schleiffer A."/>
            <person name="Sarov M."/>
            <person name="Pozniakovsky A."/>
            <person name="Slabicki M.M."/>
            <person name="Schloissnig S."/>
            <person name="Steinmacher I."/>
            <person name="Leuschner M."/>
            <person name="Ssykor A."/>
            <person name="Lawo S."/>
            <person name="Pelletier L."/>
            <person name="Stark H."/>
            <person name="Nasmyth K."/>
            <person name="Ellenberg J."/>
            <person name="Durbin R."/>
            <person name="Buchholz F."/>
            <person name="Mechtler K."/>
            <person name="Hyman A.A."/>
            <person name="Peters J.M."/>
        </authorList>
    </citation>
    <scope>FUNCTION</scope>
    <scope>INTERACTION WITH CCDC52</scope>
</reference>
<reference key="6">
    <citation type="journal article" date="2014" name="PLoS ONE">
        <title>Talpid3-binding centrosomal protein Cep120 is required for centriole duplication and proliferation of cerebellar granule neuron progenitors.</title>
        <authorList>
            <person name="Wu C."/>
            <person name="Yang M."/>
            <person name="Li J."/>
            <person name="Wang C."/>
            <person name="Cao T."/>
            <person name="Tao K."/>
            <person name="Wang B."/>
        </authorList>
    </citation>
    <scope>FUNCTION</scope>
    <scope>INTERACTION WITH TALPID3</scope>
</reference>
<proteinExistence type="evidence at protein level"/>
<dbReference type="EMBL" id="AK038916">
    <property type="protein sequence ID" value="BAC30167.1"/>
    <property type="molecule type" value="mRNA"/>
</dbReference>
<dbReference type="EMBL" id="AK044808">
    <property type="protein sequence ID" value="BAC32100.1"/>
    <property type="molecule type" value="mRNA"/>
</dbReference>
<dbReference type="EMBL" id="AK044952">
    <property type="protein sequence ID" value="BAC32156.1"/>
    <property type="molecule type" value="mRNA"/>
</dbReference>
<dbReference type="EMBL" id="AK047594">
    <property type="protein sequence ID" value="BAC33092.1"/>
    <property type="molecule type" value="mRNA"/>
</dbReference>
<dbReference type="EMBL" id="AK079319">
    <property type="protein sequence ID" value="BAC37606.1"/>
    <property type="molecule type" value="mRNA"/>
</dbReference>
<dbReference type="EMBL" id="BC046493">
    <property type="protein sequence ID" value="AAH46493.1"/>
    <property type="molecule type" value="mRNA"/>
</dbReference>
<dbReference type="EMBL" id="BC048590">
    <property type="protein sequence ID" value="AAH48590.1"/>
    <property type="molecule type" value="mRNA"/>
</dbReference>
<dbReference type="EMBL" id="BC053439">
    <property type="protein sequence ID" value="AAH53439.1"/>
    <property type="molecule type" value="mRNA"/>
</dbReference>
<dbReference type="CCDS" id="CCDS37822.1">
    <molecule id="Q7TSG1-1"/>
</dbReference>
<dbReference type="RefSeq" id="NP_848801.2">
    <molecule id="Q7TSG1-1"/>
    <property type="nucleotide sequence ID" value="NM_178686.4"/>
</dbReference>
<dbReference type="PDB" id="6EWP">
    <property type="method" value="X-ray"/>
    <property type="resolution" value="1.85 A"/>
    <property type="chains" value="A/B/C=436-634"/>
</dbReference>
<dbReference type="PDBsum" id="6EWP"/>
<dbReference type="SMR" id="Q7TSG1"/>
<dbReference type="BioGRID" id="230403">
    <property type="interactions" value="39"/>
</dbReference>
<dbReference type="FunCoup" id="Q7TSG1">
    <property type="interactions" value="2428"/>
</dbReference>
<dbReference type="IntAct" id="Q7TSG1">
    <property type="interactions" value="38"/>
</dbReference>
<dbReference type="STRING" id="10090.ENSMUSP00000062433"/>
<dbReference type="GlyGen" id="Q7TSG1">
    <property type="glycosylation" value="1 site"/>
</dbReference>
<dbReference type="iPTMnet" id="Q7TSG1"/>
<dbReference type="PhosphoSitePlus" id="Q7TSG1"/>
<dbReference type="jPOST" id="Q7TSG1"/>
<dbReference type="PaxDb" id="10090-ENSMUSP00000062433"/>
<dbReference type="PeptideAtlas" id="Q7TSG1"/>
<dbReference type="ProteomicsDB" id="281156">
    <molecule id="Q7TSG1-1"/>
</dbReference>
<dbReference type="ProteomicsDB" id="281157">
    <molecule id="Q7TSG1-2"/>
</dbReference>
<dbReference type="ProteomicsDB" id="281158">
    <molecule id="Q7TSG1-3"/>
</dbReference>
<dbReference type="ProteomicsDB" id="281159">
    <molecule id="Q7TSG1-4"/>
</dbReference>
<dbReference type="Antibodypedia" id="25668">
    <property type="antibodies" value="75 antibodies from 17 providers"/>
</dbReference>
<dbReference type="DNASU" id="225523"/>
<dbReference type="Ensembl" id="ENSMUST00000049811.8">
    <molecule id="Q7TSG1-1"/>
    <property type="protein sequence ID" value="ENSMUSP00000062433.7"/>
    <property type="gene ID" value="ENSMUSG00000048799.9"/>
</dbReference>
<dbReference type="Ensembl" id="ENSMUST00000237062.2">
    <molecule id="Q7TSG1-2"/>
    <property type="protein sequence ID" value="ENSMUSP00000158481.2"/>
    <property type="gene ID" value="ENSMUSG00000048799.9"/>
</dbReference>
<dbReference type="GeneID" id="225523"/>
<dbReference type="KEGG" id="mmu:225523"/>
<dbReference type="UCSC" id="uc008exy.1">
    <molecule id="Q7TSG1-1"/>
    <property type="organism name" value="mouse"/>
</dbReference>
<dbReference type="UCSC" id="uc008exz.1">
    <molecule id="Q7TSG1-2"/>
    <property type="organism name" value="mouse"/>
</dbReference>
<dbReference type="AGR" id="MGI:2147298"/>
<dbReference type="CTD" id="153241"/>
<dbReference type="MGI" id="MGI:2147298">
    <property type="gene designation" value="Cep120"/>
</dbReference>
<dbReference type="VEuPathDB" id="HostDB:ENSMUSG00000048799"/>
<dbReference type="eggNOG" id="ENOG502QPT0">
    <property type="taxonomic scope" value="Eukaryota"/>
</dbReference>
<dbReference type="GeneTree" id="ENSGT00390000009378"/>
<dbReference type="HOGENOM" id="CLU_012372_0_0_1"/>
<dbReference type="InParanoid" id="Q7TSG1"/>
<dbReference type="OMA" id="HTNQPEF"/>
<dbReference type="OrthoDB" id="332250at2759"/>
<dbReference type="PhylomeDB" id="Q7TSG1"/>
<dbReference type="TreeFam" id="TF329430"/>
<dbReference type="BioGRID-ORCS" id="225523">
    <property type="hits" value="10 hits in 79 CRISPR screens"/>
</dbReference>
<dbReference type="CD-CODE" id="01CA17F3">
    <property type="entry name" value="Centrosome"/>
</dbReference>
<dbReference type="ChiTaRS" id="Cep120">
    <property type="organism name" value="mouse"/>
</dbReference>
<dbReference type="PRO" id="PR:Q7TSG1"/>
<dbReference type="Proteomes" id="UP000000589">
    <property type="component" value="Chromosome 18"/>
</dbReference>
<dbReference type="RNAct" id="Q7TSG1">
    <property type="molecule type" value="protein"/>
</dbReference>
<dbReference type="Bgee" id="ENSMUSG00000048799">
    <property type="expression patterns" value="Expressed in superior cervical ganglion and 236 other cell types or tissues"/>
</dbReference>
<dbReference type="GO" id="GO:0005814">
    <property type="term" value="C:centriole"/>
    <property type="evidence" value="ECO:0000314"/>
    <property type="project" value="UniProtKB"/>
</dbReference>
<dbReference type="GO" id="GO:0005813">
    <property type="term" value="C:centrosome"/>
    <property type="evidence" value="ECO:0000314"/>
    <property type="project" value="MGI"/>
</dbReference>
<dbReference type="GO" id="GO:0005737">
    <property type="term" value="C:cytoplasm"/>
    <property type="evidence" value="ECO:0007669"/>
    <property type="project" value="UniProtKB-KW"/>
</dbReference>
<dbReference type="GO" id="GO:0030953">
    <property type="term" value="P:astral microtubule organization"/>
    <property type="evidence" value="ECO:0000314"/>
    <property type="project" value="MGI"/>
</dbReference>
<dbReference type="GO" id="GO:0008283">
    <property type="term" value="P:cell population proliferation"/>
    <property type="evidence" value="ECO:0000315"/>
    <property type="project" value="MGI"/>
</dbReference>
<dbReference type="GO" id="GO:0007098">
    <property type="term" value="P:centrosome cycle"/>
    <property type="evidence" value="ECO:0000315"/>
    <property type="project" value="UniProtKB"/>
</dbReference>
<dbReference type="GO" id="GO:0021987">
    <property type="term" value="P:cerebral cortex development"/>
    <property type="evidence" value="ECO:0000315"/>
    <property type="project" value="MGI"/>
</dbReference>
<dbReference type="GO" id="GO:0022027">
    <property type="term" value="P:interkinetic nuclear migration"/>
    <property type="evidence" value="ECO:0000315"/>
    <property type="project" value="MGI"/>
</dbReference>
<dbReference type="GO" id="GO:0000226">
    <property type="term" value="P:microtubule cytoskeleton organization"/>
    <property type="evidence" value="ECO:0000315"/>
    <property type="project" value="MGI"/>
</dbReference>
<dbReference type="GO" id="GO:0022008">
    <property type="term" value="P:neurogenesis"/>
    <property type="evidence" value="ECO:0000315"/>
    <property type="project" value="MGI"/>
</dbReference>
<dbReference type="GO" id="GO:1903724">
    <property type="term" value="P:positive regulation of centriole elongation"/>
    <property type="evidence" value="ECO:0000250"/>
    <property type="project" value="UniProtKB"/>
</dbReference>
<dbReference type="GO" id="GO:0010825">
    <property type="term" value="P:positive regulation of centrosome duplication"/>
    <property type="evidence" value="ECO:0000315"/>
    <property type="project" value="UniProtKB"/>
</dbReference>
<dbReference type="GO" id="GO:0045724">
    <property type="term" value="P:positive regulation of cilium assembly"/>
    <property type="evidence" value="ECO:0000315"/>
    <property type="project" value="UniProtKB"/>
</dbReference>
<dbReference type="GO" id="GO:1904951">
    <property type="term" value="P:positive regulation of establishment of protein localization"/>
    <property type="evidence" value="ECO:0000250"/>
    <property type="project" value="UniProtKB"/>
</dbReference>
<dbReference type="GO" id="GO:0032886">
    <property type="term" value="P:regulation of microtubule-based process"/>
    <property type="evidence" value="ECO:0000315"/>
    <property type="project" value="MGI"/>
</dbReference>
<dbReference type="GO" id="GO:0032880">
    <property type="term" value="P:regulation of protein localization"/>
    <property type="evidence" value="ECO:0000315"/>
    <property type="project" value="MGI"/>
</dbReference>
<dbReference type="CDD" id="cd00030">
    <property type="entry name" value="C2"/>
    <property type="match status" value="1"/>
</dbReference>
<dbReference type="FunFam" id="2.60.40.150:FF:000112">
    <property type="entry name" value="centrosomal protein of 120 kDa isoform X1"/>
    <property type="match status" value="1"/>
</dbReference>
<dbReference type="Gene3D" id="2.60.40.150">
    <property type="entry name" value="C2 domain"/>
    <property type="match status" value="1"/>
</dbReference>
<dbReference type="InterPro" id="IPR000008">
    <property type="entry name" value="C2_dom"/>
</dbReference>
<dbReference type="InterPro" id="IPR035892">
    <property type="entry name" value="C2_domain_sf"/>
</dbReference>
<dbReference type="InterPro" id="IPR039893">
    <property type="entry name" value="CEP120-like"/>
</dbReference>
<dbReference type="InterPro" id="IPR022136">
    <property type="entry name" value="DUF3668"/>
</dbReference>
<dbReference type="PANTHER" id="PTHR21574">
    <property type="entry name" value="CENTROSOMAL PROTEIN OF 120 KDA"/>
    <property type="match status" value="1"/>
</dbReference>
<dbReference type="PANTHER" id="PTHR21574:SF0">
    <property type="entry name" value="CENTROSOMAL PROTEIN OF 120 KDA"/>
    <property type="match status" value="1"/>
</dbReference>
<dbReference type="Pfam" id="PF00168">
    <property type="entry name" value="C2"/>
    <property type="match status" value="2"/>
</dbReference>
<dbReference type="Pfam" id="PF12416">
    <property type="entry name" value="DUF3668"/>
    <property type="match status" value="1"/>
</dbReference>
<dbReference type="SUPFAM" id="SSF49562">
    <property type="entry name" value="C2 domain (Calcium/lipid-binding domain, CaLB)"/>
    <property type="match status" value="1"/>
</dbReference>
<dbReference type="PROSITE" id="PS50004">
    <property type="entry name" value="C2"/>
    <property type="match status" value="2"/>
</dbReference>
<keyword id="KW-0002">3D-structure</keyword>
<keyword id="KW-0025">Alternative splicing</keyword>
<keyword id="KW-0175">Coiled coil</keyword>
<keyword id="KW-0963">Cytoplasm</keyword>
<keyword id="KW-0206">Cytoskeleton</keyword>
<keyword id="KW-0597">Phosphoprotein</keyword>
<keyword id="KW-1185">Reference proteome</keyword>
<keyword id="KW-0677">Repeat</keyword>